<name>FABM_STRMU</name>
<proteinExistence type="inferred from homology"/>
<sequence length="263" mass="28927">MDFKEILYNVDNGVATLTLNRPEVSNGFNIPICEEILKAIDIAKKDDTVQILLINANGKVFSVGGDLVEMQRAVDADDVQSLVRIAELVNKISFALKRLPKPVVMSTDGAVAGAAANIAVAADFCIASDKTRFIQAFVNVGLAPDAGGLFLLTRAIGITRATQLAMTGEALNAEKALEYGIVYKVCEPEKLEKITDRVITRLKRGSVNSYKAIKEMVWQSSFAGWQEYEDLELELQKSLAFTNDFKEGVRAYTEKRRPKFTGK</sequence>
<accession>Q8DSN0</accession>
<accession>E2IPL4</accession>
<accession>Q2KHJ2</accession>
<dbReference type="EC" id="5.3.3.14"/>
<dbReference type="EMBL" id="HM583675">
    <property type="protein sequence ID" value="ADK66337.1"/>
    <property type="molecule type" value="Genomic_DNA"/>
</dbReference>
<dbReference type="EMBL" id="AE014133">
    <property type="protein sequence ID" value="AAN59379.1"/>
    <property type="molecule type" value="Genomic_DNA"/>
</dbReference>
<dbReference type="EMBL" id="BK005411">
    <property type="protein sequence ID" value="DAA05501.1"/>
    <property type="molecule type" value="Genomic_DNA"/>
</dbReference>
<dbReference type="RefSeq" id="NP_722073.1">
    <property type="nucleotide sequence ID" value="NC_004350.2"/>
</dbReference>
<dbReference type="RefSeq" id="WP_002262530.1">
    <property type="nucleotide sequence ID" value="NC_004350.2"/>
</dbReference>
<dbReference type="SMR" id="Q8DSN0"/>
<dbReference type="STRING" id="210007.SMU_1746c"/>
<dbReference type="KEGG" id="smu:SMU_1746c"/>
<dbReference type="PATRIC" id="fig|210007.7.peg.1562"/>
<dbReference type="eggNOG" id="COG1024">
    <property type="taxonomic scope" value="Bacteria"/>
</dbReference>
<dbReference type="HOGENOM" id="CLU_009834_7_2_9"/>
<dbReference type="OrthoDB" id="9771883at2"/>
<dbReference type="PhylomeDB" id="Q8DSN0"/>
<dbReference type="UniPathway" id="UPA00094"/>
<dbReference type="Proteomes" id="UP000002512">
    <property type="component" value="Chromosome"/>
</dbReference>
<dbReference type="GO" id="GO:0034017">
    <property type="term" value="F:trans-2-decenoyl-acyl-carrier-protein isomerase activity"/>
    <property type="evidence" value="ECO:0007669"/>
    <property type="project" value="UniProtKB-EC"/>
</dbReference>
<dbReference type="GO" id="GO:0006633">
    <property type="term" value="P:fatty acid biosynthetic process"/>
    <property type="evidence" value="ECO:0007669"/>
    <property type="project" value="UniProtKB-UniPathway"/>
</dbReference>
<dbReference type="CDD" id="cd06558">
    <property type="entry name" value="crotonase-like"/>
    <property type="match status" value="1"/>
</dbReference>
<dbReference type="Gene3D" id="3.90.226.10">
    <property type="entry name" value="2-enoyl-CoA Hydratase, Chain A, domain 1"/>
    <property type="match status" value="1"/>
</dbReference>
<dbReference type="Gene3D" id="1.10.12.10">
    <property type="entry name" value="Lyase 2-enoyl-coa Hydratase, Chain A, domain 2"/>
    <property type="match status" value="1"/>
</dbReference>
<dbReference type="InterPro" id="IPR029045">
    <property type="entry name" value="ClpP/crotonase-like_dom_sf"/>
</dbReference>
<dbReference type="InterPro" id="IPR001753">
    <property type="entry name" value="Enoyl-CoA_hydra/iso"/>
</dbReference>
<dbReference type="InterPro" id="IPR014748">
    <property type="entry name" value="Enoyl-CoA_hydra_C"/>
</dbReference>
<dbReference type="InterPro" id="IPR051683">
    <property type="entry name" value="Enoyl-CoA_Hydratase/Isomerase"/>
</dbReference>
<dbReference type="NCBIfam" id="NF005575">
    <property type="entry name" value="PRK07260.1"/>
    <property type="match status" value="1"/>
</dbReference>
<dbReference type="PANTHER" id="PTHR42964">
    <property type="entry name" value="ENOYL-COA HYDRATASE"/>
    <property type="match status" value="1"/>
</dbReference>
<dbReference type="PANTHER" id="PTHR42964:SF1">
    <property type="entry name" value="POLYKETIDE BIOSYNTHESIS ENOYL-COA HYDRATASE PKSH-RELATED"/>
    <property type="match status" value="1"/>
</dbReference>
<dbReference type="Pfam" id="PF00378">
    <property type="entry name" value="ECH_1"/>
    <property type="match status" value="1"/>
</dbReference>
<dbReference type="SUPFAM" id="SSF52096">
    <property type="entry name" value="ClpP/crotonase"/>
    <property type="match status" value="1"/>
</dbReference>
<gene>
    <name type="primary">fabM</name>
    <name type="ordered locus">SMU_1746c</name>
</gene>
<comment type="function">
    <text evidence="1 2">Catalyzes the isomerization of trans-2-decenoyl-ACP to cis-3-decenoyl-ACP (By similarity). Required for survival at low pH.</text>
</comment>
<comment type="catalytic activity">
    <reaction>
        <text>(2E)-decenoyl-[ACP] = (3Z)-decenoyl-[ACP]</text>
        <dbReference type="Rhea" id="RHEA:23568"/>
        <dbReference type="Rhea" id="RHEA-COMP:9639"/>
        <dbReference type="Rhea" id="RHEA-COMP:9927"/>
        <dbReference type="ChEBI" id="CHEBI:78467"/>
        <dbReference type="ChEBI" id="CHEBI:78798"/>
        <dbReference type="EC" id="5.3.3.14"/>
    </reaction>
</comment>
<comment type="pathway">
    <text>Lipid metabolism; fatty acid biosynthesis.</text>
</comment>
<comment type="subunit">
    <text evidence="1">Homotetramer.</text>
</comment>
<comment type="disruption phenotype">
    <text evidence="2">Mutants do not produce monounsaturated fatty acids, exhibit reduced glycolytic capability and altered glucose-PTS activity, and are extremely sensitive to low pH.</text>
</comment>
<comment type="similarity">
    <text evidence="3">Belongs to the enoyl-CoA hydratase/isomerase family.</text>
</comment>
<reference key="1">
    <citation type="journal article" date="2012" name="Arch. Oral Biol.">
        <title>Fatty-acid profiles and expression of the fabM gene in a fluoride-resistant strain of Streptococcus mutans.</title>
        <authorList>
            <person name="Zhu L."/>
            <person name="Zhang Z."/>
            <person name="Liang J."/>
        </authorList>
    </citation>
    <scope>NUCLEOTIDE SEQUENCE [GENOMIC DNA]</scope>
    <source>
        <strain>ATCC 700610 / UA159</strain>
    </source>
</reference>
<reference key="2">
    <citation type="journal article" date="2002" name="Proc. Natl. Acad. Sci. U.S.A.">
        <title>Genome sequence of Streptococcus mutans UA159, a cariogenic dental pathogen.</title>
        <authorList>
            <person name="Ajdic D.J."/>
            <person name="McShan W.M."/>
            <person name="McLaughlin R.E."/>
            <person name="Savic G."/>
            <person name="Chang J."/>
            <person name="Carson M.B."/>
            <person name="Primeaux C."/>
            <person name="Tian R."/>
            <person name="Kenton S."/>
            <person name="Jia H.G."/>
            <person name="Lin S.P."/>
            <person name="Qian Y."/>
            <person name="Li S."/>
            <person name="Zhu H."/>
            <person name="Najar F.Z."/>
            <person name="Lai H."/>
            <person name="White J."/>
            <person name="Roe B.A."/>
            <person name="Ferretti J.J."/>
        </authorList>
    </citation>
    <scope>NUCLEOTIDE SEQUENCE [LARGE SCALE GENOMIC DNA]</scope>
    <source>
        <strain>ATCC 700610 / UA159</strain>
    </source>
</reference>
<reference key="3">
    <citation type="journal article" date="2004" name="J. Bacteriol.">
        <title>The fabM gene product of Streptococcus mutans is responsible for the synthesis of monounsaturated fatty acids and is necessary for survival at low pH.</title>
        <authorList>
            <person name="Fozo E.M."/>
            <person name="Quivey R.G. Jr."/>
        </authorList>
    </citation>
    <scope>FUNCTION</scope>
    <scope>DISRUPTION PHENOTYPE</scope>
    <scope>GENE NAME</scope>
    <source>
        <strain>ATCC 700610 / UA159</strain>
    </source>
</reference>
<keyword id="KW-0276">Fatty acid metabolism</keyword>
<keyword id="KW-0413">Isomerase</keyword>
<keyword id="KW-0443">Lipid metabolism</keyword>
<keyword id="KW-1185">Reference proteome</keyword>
<protein>
    <recommendedName>
        <fullName>Trans-2-decenoyl-[acyl-carrier-protein] isomerase</fullName>
        <ecNumber>5.3.3.14</ecNumber>
    </recommendedName>
</protein>
<evidence type="ECO:0000250" key="1"/>
<evidence type="ECO:0000269" key="2">
    <source>
    </source>
</evidence>
<evidence type="ECO:0000305" key="3"/>
<organism>
    <name type="scientific">Streptococcus mutans serotype c (strain ATCC 700610 / UA159)</name>
    <dbReference type="NCBI Taxonomy" id="210007"/>
    <lineage>
        <taxon>Bacteria</taxon>
        <taxon>Bacillati</taxon>
        <taxon>Bacillota</taxon>
        <taxon>Bacilli</taxon>
        <taxon>Lactobacillales</taxon>
        <taxon>Streptococcaceae</taxon>
        <taxon>Streptococcus</taxon>
    </lineage>
</organism>
<feature type="chain" id="PRO_0000419022" description="Trans-2-decenoyl-[acyl-carrier-protein] isomerase">
    <location>
        <begin position="1"/>
        <end position="263"/>
    </location>
</feature>